<organism>
    <name type="scientific">Methanocaldococcus jannaschii (strain ATCC 43067 / DSM 2661 / JAL-1 / JCM 10045 / NBRC 100440)</name>
    <name type="common">Methanococcus jannaschii</name>
    <dbReference type="NCBI Taxonomy" id="243232"/>
    <lineage>
        <taxon>Archaea</taxon>
        <taxon>Methanobacteriati</taxon>
        <taxon>Methanobacteriota</taxon>
        <taxon>Methanomada group</taxon>
        <taxon>Methanococci</taxon>
        <taxon>Methanococcales</taxon>
        <taxon>Methanocaldococcaceae</taxon>
        <taxon>Methanocaldococcus</taxon>
    </lineage>
</organism>
<evidence type="ECO:0000305" key="1"/>
<protein>
    <recommendedName>
        <fullName>Uncharacterized glycosyltransferase MJ1059</fullName>
        <ecNumber>2.4.-.-</ecNumber>
    </recommendedName>
</protein>
<sequence>MSNKKKQLTVMGTVWDFWSVLKMFDKLYESKYISFYEPWLKGEIDKEKIILFNEKSKNPLLWPFKILKRTYKILKIIREFKPDLVITHHDDANVSIIPVILLNKIFKISNNTKFILWVRNNPIESYKEGLYSKIIILAYKYFYKYADIIIVQTQENKKIIESHFKSLKNKTKIVPNVYEIDKLQQLSNEPLEKQYRNIFKDSFVFINIGRLTEQKGQWFLIRSFKRVTEKYPNAKLIILGDGELKNKLQELINKLNLQNNVYLLGMQKNPFKFLKHSNCFVFSSLWEGLPNTVIEALSLNLPVISTDCKTGPREILCPELNISDKIDYPYYGKYGILTKPFSREFIWQDLNEKPLIEEEKMLADLMIKMIEDEDLRKRYSNGLERAKDFDIEKIIKEWKLLIEGTI</sequence>
<dbReference type="EC" id="2.4.-.-"/>
<dbReference type="EMBL" id="L77117">
    <property type="protein sequence ID" value="AAB99063.1"/>
    <property type="molecule type" value="Genomic_DNA"/>
</dbReference>
<dbReference type="PIR" id="B64432">
    <property type="entry name" value="B64432"/>
</dbReference>
<dbReference type="RefSeq" id="WP_010870572.1">
    <property type="nucleotide sequence ID" value="NC_000909.1"/>
</dbReference>
<dbReference type="SMR" id="Q58459"/>
<dbReference type="STRING" id="243232.MJ_1059"/>
<dbReference type="CAZy" id="GT4">
    <property type="family name" value="Glycosyltransferase Family 4"/>
</dbReference>
<dbReference type="PaxDb" id="243232-MJ_1059"/>
<dbReference type="DNASU" id="1451956"/>
<dbReference type="EnsemblBacteria" id="AAB99063">
    <property type="protein sequence ID" value="AAB99063"/>
    <property type="gene ID" value="MJ_1059"/>
</dbReference>
<dbReference type="GeneID" id="1451956"/>
<dbReference type="KEGG" id="mja:MJ_1059"/>
<dbReference type="eggNOG" id="arCOG01403">
    <property type="taxonomic scope" value="Archaea"/>
</dbReference>
<dbReference type="HOGENOM" id="CLU_009583_0_0_2"/>
<dbReference type="InParanoid" id="Q58459"/>
<dbReference type="OrthoDB" id="132546at2157"/>
<dbReference type="PhylomeDB" id="Q58459"/>
<dbReference type="Proteomes" id="UP000000805">
    <property type="component" value="Chromosome"/>
</dbReference>
<dbReference type="GO" id="GO:0016757">
    <property type="term" value="F:glycosyltransferase activity"/>
    <property type="evidence" value="ECO:0007669"/>
    <property type="project" value="UniProtKB-KW"/>
</dbReference>
<dbReference type="CDD" id="cd03811">
    <property type="entry name" value="GT4_GT28_WabH-like"/>
    <property type="match status" value="1"/>
</dbReference>
<dbReference type="Gene3D" id="3.40.50.2000">
    <property type="entry name" value="Glycogen Phosphorylase B"/>
    <property type="match status" value="2"/>
</dbReference>
<dbReference type="InterPro" id="IPR001296">
    <property type="entry name" value="Glyco_trans_1"/>
</dbReference>
<dbReference type="PANTHER" id="PTHR12526">
    <property type="entry name" value="GLYCOSYLTRANSFERASE"/>
    <property type="match status" value="1"/>
</dbReference>
<dbReference type="PANTHER" id="PTHR12526:SF630">
    <property type="entry name" value="GLYCOSYLTRANSFERASE"/>
    <property type="match status" value="1"/>
</dbReference>
<dbReference type="Pfam" id="PF00534">
    <property type="entry name" value="Glycos_transf_1"/>
    <property type="match status" value="1"/>
</dbReference>
<dbReference type="SUPFAM" id="SSF53756">
    <property type="entry name" value="UDP-Glycosyltransferase/glycogen phosphorylase"/>
    <property type="match status" value="1"/>
</dbReference>
<name>Y1059_METJA</name>
<gene>
    <name type="ordered locus">MJ1059</name>
</gene>
<feature type="chain" id="PRO_0000080321" description="Uncharacterized glycosyltransferase MJ1059">
    <location>
        <begin position="1"/>
        <end position="406"/>
    </location>
</feature>
<comment type="similarity">
    <text evidence="1">Belongs to the glycosyltransferase group 1 family. Glycosyltransferase 4 subfamily.</text>
</comment>
<reference key="1">
    <citation type="journal article" date="1996" name="Science">
        <title>Complete genome sequence of the methanogenic archaeon, Methanococcus jannaschii.</title>
        <authorList>
            <person name="Bult C.J."/>
            <person name="White O."/>
            <person name="Olsen G.J."/>
            <person name="Zhou L."/>
            <person name="Fleischmann R.D."/>
            <person name="Sutton G.G."/>
            <person name="Blake J.A."/>
            <person name="FitzGerald L.M."/>
            <person name="Clayton R.A."/>
            <person name="Gocayne J.D."/>
            <person name="Kerlavage A.R."/>
            <person name="Dougherty B.A."/>
            <person name="Tomb J.-F."/>
            <person name="Adams M.D."/>
            <person name="Reich C.I."/>
            <person name="Overbeek R."/>
            <person name="Kirkness E.F."/>
            <person name="Weinstock K.G."/>
            <person name="Merrick J.M."/>
            <person name="Glodek A."/>
            <person name="Scott J.L."/>
            <person name="Geoghagen N.S.M."/>
            <person name="Weidman J.F."/>
            <person name="Fuhrmann J.L."/>
            <person name="Nguyen D."/>
            <person name="Utterback T.R."/>
            <person name="Kelley J.M."/>
            <person name="Peterson J.D."/>
            <person name="Sadow P.W."/>
            <person name="Hanna M.C."/>
            <person name="Cotton M.D."/>
            <person name="Roberts K.M."/>
            <person name="Hurst M.A."/>
            <person name="Kaine B.P."/>
            <person name="Borodovsky M."/>
            <person name="Klenk H.-P."/>
            <person name="Fraser C.M."/>
            <person name="Smith H.O."/>
            <person name="Woese C.R."/>
            <person name="Venter J.C."/>
        </authorList>
    </citation>
    <scope>NUCLEOTIDE SEQUENCE [LARGE SCALE GENOMIC DNA]</scope>
    <source>
        <strain>ATCC 43067 / DSM 2661 / JAL-1 / JCM 10045 / NBRC 100440</strain>
    </source>
</reference>
<keyword id="KW-0328">Glycosyltransferase</keyword>
<keyword id="KW-1185">Reference proteome</keyword>
<keyword id="KW-0808">Transferase</keyword>
<proteinExistence type="inferred from homology"/>
<accession>Q58459</accession>